<reference key="1">
    <citation type="journal article" date="2007" name="Genome Biol.">
        <title>Genome analysis and genome-wide proteomics of Thermococcus gammatolerans, the most radioresistant organism known amongst the Archaea.</title>
        <authorList>
            <person name="Zivanovic Y."/>
            <person name="Armengaud J."/>
            <person name="Lagorce A."/>
            <person name="Leplat C."/>
            <person name="Guerin P."/>
            <person name="Dutertre M."/>
            <person name="Anthouard V."/>
            <person name="Forterre P."/>
            <person name="Wincker P."/>
            <person name="Confalonieri F."/>
        </authorList>
    </citation>
    <scope>NUCLEOTIDE SEQUENCE [LARGE SCALE GENOMIC DNA]</scope>
    <source>
        <strain>DSM 15229 / JCM 11827 / EJ3</strain>
    </source>
</reference>
<name>RL24E_THEGJ</name>
<feature type="chain" id="PRO_1000212915" description="Large ribosomal subunit protein eL24">
    <location>
        <begin position="1"/>
        <end position="68"/>
    </location>
</feature>
<feature type="zinc finger region" description="C4-type" evidence="1">
    <location>
        <begin position="7"/>
        <end position="37"/>
    </location>
</feature>
<feature type="binding site" evidence="1">
    <location>
        <position position="7"/>
    </location>
    <ligand>
        <name>Zn(2+)</name>
        <dbReference type="ChEBI" id="CHEBI:29105"/>
    </ligand>
</feature>
<feature type="binding site" evidence="1">
    <location>
        <position position="10"/>
    </location>
    <ligand>
        <name>Zn(2+)</name>
        <dbReference type="ChEBI" id="CHEBI:29105"/>
    </ligand>
</feature>
<feature type="binding site" evidence="1">
    <location>
        <position position="33"/>
    </location>
    <ligand>
        <name>Zn(2+)</name>
        <dbReference type="ChEBI" id="CHEBI:29105"/>
    </ligand>
</feature>
<feature type="binding site" evidence="1">
    <location>
        <position position="37"/>
    </location>
    <ligand>
        <name>Zn(2+)</name>
        <dbReference type="ChEBI" id="CHEBI:29105"/>
    </ligand>
</feature>
<gene>
    <name evidence="1" type="primary">rpl24e</name>
    <name type="ordered locus">TGAM_1874</name>
</gene>
<evidence type="ECO:0000255" key="1">
    <source>
        <dbReference type="HAMAP-Rule" id="MF_00773"/>
    </source>
</evidence>
<evidence type="ECO:0000305" key="2"/>
<accession>C5A1V7</accession>
<proteinExistence type="inferred from homology"/>
<dbReference type="EMBL" id="CP001398">
    <property type="protein sequence ID" value="ACS34376.1"/>
    <property type="molecule type" value="Genomic_DNA"/>
</dbReference>
<dbReference type="RefSeq" id="WP_015859485.1">
    <property type="nucleotide sequence ID" value="NC_012804.1"/>
</dbReference>
<dbReference type="SMR" id="C5A1V7"/>
<dbReference type="STRING" id="593117.TGAM_1874"/>
<dbReference type="PaxDb" id="593117-TGAM_1874"/>
<dbReference type="GeneID" id="7988278"/>
<dbReference type="KEGG" id="tga:TGAM_1874"/>
<dbReference type="PATRIC" id="fig|593117.10.peg.1884"/>
<dbReference type="eggNOG" id="arCOG01950">
    <property type="taxonomic scope" value="Archaea"/>
</dbReference>
<dbReference type="HOGENOM" id="CLU_190191_0_0_2"/>
<dbReference type="OrthoDB" id="55506at2157"/>
<dbReference type="Proteomes" id="UP000001488">
    <property type="component" value="Chromosome"/>
</dbReference>
<dbReference type="GO" id="GO:1990904">
    <property type="term" value="C:ribonucleoprotein complex"/>
    <property type="evidence" value="ECO:0007669"/>
    <property type="project" value="UniProtKB-KW"/>
</dbReference>
<dbReference type="GO" id="GO:0005840">
    <property type="term" value="C:ribosome"/>
    <property type="evidence" value="ECO:0007669"/>
    <property type="project" value="UniProtKB-KW"/>
</dbReference>
<dbReference type="GO" id="GO:0019843">
    <property type="term" value="F:rRNA binding"/>
    <property type="evidence" value="ECO:0007669"/>
    <property type="project" value="UniProtKB-UniRule"/>
</dbReference>
<dbReference type="GO" id="GO:0003735">
    <property type="term" value="F:structural constituent of ribosome"/>
    <property type="evidence" value="ECO:0007669"/>
    <property type="project" value="InterPro"/>
</dbReference>
<dbReference type="GO" id="GO:0008270">
    <property type="term" value="F:zinc ion binding"/>
    <property type="evidence" value="ECO:0007669"/>
    <property type="project" value="UniProtKB-UniRule"/>
</dbReference>
<dbReference type="GO" id="GO:0006412">
    <property type="term" value="P:translation"/>
    <property type="evidence" value="ECO:0007669"/>
    <property type="project" value="UniProtKB-UniRule"/>
</dbReference>
<dbReference type="CDD" id="cd00472">
    <property type="entry name" value="Ribosomal_L24e_L24"/>
    <property type="match status" value="1"/>
</dbReference>
<dbReference type="FunFam" id="2.30.170.20:FF:000001">
    <property type="entry name" value="probable ribosome biogenesis protein RLP24"/>
    <property type="match status" value="1"/>
</dbReference>
<dbReference type="Gene3D" id="2.30.170.20">
    <property type="entry name" value="Ribosomal protein L24e"/>
    <property type="match status" value="1"/>
</dbReference>
<dbReference type="HAMAP" id="MF_00773">
    <property type="entry name" value="Ribosomal_eL24"/>
    <property type="match status" value="1"/>
</dbReference>
<dbReference type="InterPro" id="IPR038630">
    <property type="entry name" value="L24e/L24_sf"/>
</dbReference>
<dbReference type="InterPro" id="IPR056366">
    <property type="entry name" value="Ribosomal_eL24"/>
</dbReference>
<dbReference type="InterPro" id="IPR055345">
    <property type="entry name" value="Ribosomal_eL24-rel_arc"/>
</dbReference>
<dbReference type="InterPro" id="IPR000988">
    <property type="entry name" value="Ribosomal_eL24-rel_N"/>
</dbReference>
<dbReference type="InterPro" id="IPR023442">
    <property type="entry name" value="Ribosomal_eL24_CS"/>
</dbReference>
<dbReference type="InterPro" id="IPR011017">
    <property type="entry name" value="TRASH_dom"/>
</dbReference>
<dbReference type="NCBIfam" id="NF034186">
    <property type="entry name" value="PRK14891.1-1"/>
    <property type="match status" value="1"/>
</dbReference>
<dbReference type="PANTHER" id="PTHR10792">
    <property type="entry name" value="60S RIBOSOMAL PROTEIN L24"/>
    <property type="match status" value="1"/>
</dbReference>
<dbReference type="PANTHER" id="PTHR10792:SF1">
    <property type="entry name" value="RIBOSOMAL PROTEIN L24"/>
    <property type="match status" value="1"/>
</dbReference>
<dbReference type="Pfam" id="PF01246">
    <property type="entry name" value="Ribosomal_L24e"/>
    <property type="match status" value="1"/>
</dbReference>
<dbReference type="SMART" id="SM00746">
    <property type="entry name" value="TRASH"/>
    <property type="match status" value="1"/>
</dbReference>
<dbReference type="SUPFAM" id="SSF57716">
    <property type="entry name" value="Glucocorticoid receptor-like (DNA-binding domain)"/>
    <property type="match status" value="1"/>
</dbReference>
<dbReference type="PROSITE" id="PS01073">
    <property type="entry name" value="RIBOSOMAL_L24E"/>
    <property type="match status" value="1"/>
</dbReference>
<comment type="function">
    <text evidence="1">Binds to the 23S rRNA.</text>
</comment>
<comment type="cofactor">
    <cofactor evidence="1">
        <name>Zn(2+)</name>
        <dbReference type="ChEBI" id="CHEBI:29105"/>
    </cofactor>
    <text evidence="1">Binds 1 zinc ion per subunit.</text>
</comment>
<comment type="subunit">
    <text evidence="1">Part of the 50S ribosomal subunit. Forms a cluster with proteins L3 and L14.</text>
</comment>
<comment type="similarity">
    <text evidence="1">Belongs to the eukaryotic ribosomal protein eL24 family.</text>
</comment>
<protein>
    <recommendedName>
        <fullName evidence="1">Large ribosomal subunit protein eL24</fullName>
    </recommendedName>
    <alternativeName>
        <fullName evidence="2">50S ribosomal protein L24e</fullName>
    </alternativeName>
</protein>
<organism>
    <name type="scientific">Thermococcus gammatolerans (strain DSM 15229 / JCM 11827 / EJ3)</name>
    <dbReference type="NCBI Taxonomy" id="593117"/>
    <lineage>
        <taxon>Archaea</taxon>
        <taxon>Methanobacteriati</taxon>
        <taxon>Methanobacteriota</taxon>
        <taxon>Thermococci</taxon>
        <taxon>Thermococcales</taxon>
        <taxon>Thermococcaceae</taxon>
        <taxon>Thermococcus</taxon>
    </lineage>
</organism>
<sequence length="68" mass="8201">MARWNVCSYCGREFEPGTGKMFVRNDGRVLFFCSSKCEKLYFMGRNPRKLKWTKAFQEARLQRAKRRK</sequence>
<keyword id="KW-0479">Metal-binding</keyword>
<keyword id="KW-1185">Reference proteome</keyword>
<keyword id="KW-0687">Ribonucleoprotein</keyword>
<keyword id="KW-0689">Ribosomal protein</keyword>
<keyword id="KW-0694">RNA-binding</keyword>
<keyword id="KW-0699">rRNA-binding</keyword>
<keyword id="KW-0862">Zinc</keyword>
<keyword id="KW-0863">Zinc-finger</keyword>